<dbReference type="EC" id="2.1.2.1" evidence="1"/>
<dbReference type="EMBL" id="CP001022">
    <property type="protein sequence ID" value="ACB62141.1"/>
    <property type="molecule type" value="Genomic_DNA"/>
</dbReference>
<dbReference type="RefSeq" id="WP_012371557.1">
    <property type="nucleotide sequence ID" value="NC_010556.1"/>
</dbReference>
<dbReference type="SMR" id="B1YEH3"/>
<dbReference type="STRING" id="262543.Exig_2693"/>
<dbReference type="KEGG" id="esi:Exig_2693"/>
<dbReference type="eggNOG" id="COG0112">
    <property type="taxonomic scope" value="Bacteria"/>
</dbReference>
<dbReference type="HOGENOM" id="CLU_022477_2_1_9"/>
<dbReference type="OrthoDB" id="9803846at2"/>
<dbReference type="UniPathway" id="UPA00193"/>
<dbReference type="UniPathway" id="UPA00288">
    <property type="reaction ID" value="UER01023"/>
</dbReference>
<dbReference type="Proteomes" id="UP000001681">
    <property type="component" value="Chromosome"/>
</dbReference>
<dbReference type="GO" id="GO:0005829">
    <property type="term" value="C:cytosol"/>
    <property type="evidence" value="ECO:0007669"/>
    <property type="project" value="TreeGrafter"/>
</dbReference>
<dbReference type="GO" id="GO:0004372">
    <property type="term" value="F:glycine hydroxymethyltransferase activity"/>
    <property type="evidence" value="ECO:0007669"/>
    <property type="project" value="UniProtKB-UniRule"/>
</dbReference>
<dbReference type="GO" id="GO:0030170">
    <property type="term" value="F:pyridoxal phosphate binding"/>
    <property type="evidence" value="ECO:0007669"/>
    <property type="project" value="UniProtKB-UniRule"/>
</dbReference>
<dbReference type="GO" id="GO:0019264">
    <property type="term" value="P:glycine biosynthetic process from serine"/>
    <property type="evidence" value="ECO:0007669"/>
    <property type="project" value="UniProtKB-UniRule"/>
</dbReference>
<dbReference type="GO" id="GO:0035999">
    <property type="term" value="P:tetrahydrofolate interconversion"/>
    <property type="evidence" value="ECO:0007669"/>
    <property type="project" value="UniProtKB-UniRule"/>
</dbReference>
<dbReference type="CDD" id="cd00378">
    <property type="entry name" value="SHMT"/>
    <property type="match status" value="1"/>
</dbReference>
<dbReference type="FunFam" id="3.40.640.10:FF:000001">
    <property type="entry name" value="Serine hydroxymethyltransferase"/>
    <property type="match status" value="1"/>
</dbReference>
<dbReference type="FunFam" id="3.90.1150.10:FF:000003">
    <property type="entry name" value="Serine hydroxymethyltransferase"/>
    <property type="match status" value="1"/>
</dbReference>
<dbReference type="Gene3D" id="3.90.1150.10">
    <property type="entry name" value="Aspartate Aminotransferase, domain 1"/>
    <property type="match status" value="1"/>
</dbReference>
<dbReference type="Gene3D" id="3.40.640.10">
    <property type="entry name" value="Type I PLP-dependent aspartate aminotransferase-like (Major domain)"/>
    <property type="match status" value="1"/>
</dbReference>
<dbReference type="HAMAP" id="MF_00051">
    <property type="entry name" value="SHMT"/>
    <property type="match status" value="1"/>
</dbReference>
<dbReference type="InterPro" id="IPR015424">
    <property type="entry name" value="PyrdxlP-dep_Trfase"/>
</dbReference>
<dbReference type="InterPro" id="IPR015421">
    <property type="entry name" value="PyrdxlP-dep_Trfase_major"/>
</dbReference>
<dbReference type="InterPro" id="IPR015422">
    <property type="entry name" value="PyrdxlP-dep_Trfase_small"/>
</dbReference>
<dbReference type="InterPro" id="IPR001085">
    <property type="entry name" value="Ser_HO-MeTrfase"/>
</dbReference>
<dbReference type="InterPro" id="IPR049943">
    <property type="entry name" value="Ser_HO-MeTrfase-like"/>
</dbReference>
<dbReference type="InterPro" id="IPR019798">
    <property type="entry name" value="Ser_HO-MeTrfase_PLP_BS"/>
</dbReference>
<dbReference type="InterPro" id="IPR039429">
    <property type="entry name" value="SHMT-like_dom"/>
</dbReference>
<dbReference type="NCBIfam" id="NF000586">
    <property type="entry name" value="PRK00011.1"/>
    <property type="match status" value="1"/>
</dbReference>
<dbReference type="PANTHER" id="PTHR11680">
    <property type="entry name" value="SERINE HYDROXYMETHYLTRANSFERASE"/>
    <property type="match status" value="1"/>
</dbReference>
<dbReference type="PANTHER" id="PTHR11680:SF35">
    <property type="entry name" value="SERINE HYDROXYMETHYLTRANSFERASE 1"/>
    <property type="match status" value="1"/>
</dbReference>
<dbReference type="Pfam" id="PF00464">
    <property type="entry name" value="SHMT"/>
    <property type="match status" value="1"/>
</dbReference>
<dbReference type="PIRSF" id="PIRSF000412">
    <property type="entry name" value="SHMT"/>
    <property type="match status" value="1"/>
</dbReference>
<dbReference type="SUPFAM" id="SSF53383">
    <property type="entry name" value="PLP-dependent transferases"/>
    <property type="match status" value="1"/>
</dbReference>
<dbReference type="PROSITE" id="PS00096">
    <property type="entry name" value="SHMT"/>
    <property type="match status" value="1"/>
</dbReference>
<accession>B1YEH3</accession>
<protein>
    <recommendedName>
        <fullName evidence="1">Serine hydroxymethyltransferase</fullName>
        <shortName evidence="1">SHMT</shortName>
        <shortName evidence="1">Serine methylase</shortName>
        <ecNumber evidence="1">2.1.2.1</ecNumber>
    </recommendedName>
</protein>
<proteinExistence type="inferred from homology"/>
<comment type="function">
    <text evidence="1">Catalyzes the reversible interconversion of serine and glycine with tetrahydrofolate (THF) serving as the one-carbon carrier. This reaction serves as the major source of one-carbon groups required for the biosynthesis of purines, thymidylate, methionine, and other important biomolecules. Also exhibits THF-independent aldolase activity toward beta-hydroxyamino acids, producing glycine and aldehydes, via a retro-aldol mechanism.</text>
</comment>
<comment type="catalytic activity">
    <reaction evidence="1">
        <text>(6R)-5,10-methylene-5,6,7,8-tetrahydrofolate + glycine + H2O = (6S)-5,6,7,8-tetrahydrofolate + L-serine</text>
        <dbReference type="Rhea" id="RHEA:15481"/>
        <dbReference type="ChEBI" id="CHEBI:15377"/>
        <dbReference type="ChEBI" id="CHEBI:15636"/>
        <dbReference type="ChEBI" id="CHEBI:33384"/>
        <dbReference type="ChEBI" id="CHEBI:57305"/>
        <dbReference type="ChEBI" id="CHEBI:57453"/>
        <dbReference type="EC" id="2.1.2.1"/>
    </reaction>
</comment>
<comment type="cofactor">
    <cofactor evidence="1">
        <name>pyridoxal 5'-phosphate</name>
        <dbReference type="ChEBI" id="CHEBI:597326"/>
    </cofactor>
</comment>
<comment type="pathway">
    <text evidence="1">One-carbon metabolism; tetrahydrofolate interconversion.</text>
</comment>
<comment type="pathway">
    <text evidence="1">Amino-acid biosynthesis; glycine biosynthesis; glycine from L-serine: step 1/1.</text>
</comment>
<comment type="subunit">
    <text evidence="1">Homodimer.</text>
</comment>
<comment type="subcellular location">
    <subcellularLocation>
        <location evidence="1">Cytoplasm</location>
    </subcellularLocation>
</comment>
<comment type="similarity">
    <text evidence="1">Belongs to the SHMT family.</text>
</comment>
<feature type="chain" id="PRO_0000369924" description="Serine hydroxymethyltransferase">
    <location>
        <begin position="1"/>
        <end position="419"/>
    </location>
</feature>
<feature type="binding site" evidence="1">
    <location>
        <position position="122"/>
    </location>
    <ligand>
        <name>(6S)-5,6,7,8-tetrahydrofolate</name>
        <dbReference type="ChEBI" id="CHEBI:57453"/>
    </ligand>
</feature>
<feature type="binding site" evidence="1">
    <location>
        <begin position="126"/>
        <end position="128"/>
    </location>
    <ligand>
        <name>(6S)-5,6,7,8-tetrahydrofolate</name>
        <dbReference type="ChEBI" id="CHEBI:57453"/>
    </ligand>
</feature>
<feature type="binding site" evidence="1">
    <location>
        <begin position="354"/>
        <end position="356"/>
    </location>
    <ligand>
        <name>(6S)-5,6,7,8-tetrahydrofolate</name>
        <dbReference type="ChEBI" id="CHEBI:57453"/>
    </ligand>
</feature>
<feature type="site" description="Plays an important role in substrate specificity" evidence="1">
    <location>
        <position position="230"/>
    </location>
</feature>
<feature type="modified residue" description="N6-(pyridoxal phosphate)lysine" evidence="1">
    <location>
        <position position="231"/>
    </location>
</feature>
<reference key="1">
    <citation type="submission" date="2008-04" db="EMBL/GenBank/DDBJ databases">
        <title>Complete sequence of chromosome of Exiguobacterium sibiricum 255-15.</title>
        <authorList>
            <consortium name="US DOE Joint Genome Institute"/>
            <person name="Copeland A."/>
            <person name="Lucas S."/>
            <person name="Lapidus A."/>
            <person name="Glavina del Rio T."/>
            <person name="Dalin E."/>
            <person name="Tice H."/>
            <person name="Bruce D."/>
            <person name="Goodwin L."/>
            <person name="Pitluck S."/>
            <person name="Kiss H."/>
            <person name="Chertkov O."/>
            <person name="Monk C."/>
            <person name="Brettin T."/>
            <person name="Detter J.C."/>
            <person name="Han C."/>
            <person name="Kuske C.R."/>
            <person name="Schmutz J."/>
            <person name="Larimer F."/>
            <person name="Land M."/>
            <person name="Hauser L."/>
            <person name="Kyrpides N."/>
            <person name="Mikhailova N."/>
            <person name="Vishnivetskaya T."/>
            <person name="Rodrigues D.F."/>
            <person name="Gilichinsky D."/>
            <person name="Tiedje J."/>
            <person name="Richardson P."/>
        </authorList>
    </citation>
    <scope>NUCLEOTIDE SEQUENCE [LARGE SCALE GENOMIC DNA]</scope>
    <source>
        <strain>DSM 17290 / CCUG 55495 / CIP 109462 / JCM 13490 / 255-15</strain>
    </source>
</reference>
<gene>
    <name evidence="1" type="primary">glyA</name>
    <name type="ordered locus">Exig_2693</name>
</gene>
<keyword id="KW-0028">Amino-acid biosynthesis</keyword>
<keyword id="KW-0963">Cytoplasm</keyword>
<keyword id="KW-0554">One-carbon metabolism</keyword>
<keyword id="KW-0663">Pyridoxal phosphate</keyword>
<keyword id="KW-1185">Reference proteome</keyword>
<keyword id="KW-0808">Transferase</keyword>
<sequence length="419" mass="45715">MEQTPLTYLKQQDEELFSAMRKELKRQRDNIELIASENFVSQAVMEAQGSVLTNKYAEGYPGRRYYGGCEFVDLAENLARDRAKAIFGAEHVNVQPHSGAQANMAVYFTILNQGDTVLGMNLSHGGHLTHGSPVNFSGVQYNFVEYGVDPETEMIDYDVVAKLAEEHKPKLIVAGASAYPRVIDFKRFREIADSVGAYLMVDMAHIAGLVAAGLHPNPVEHAHFVTTTTHKTLRGPRGGMILCKEEHAKAIDKSIFPGIQGGPLMHVIAAKAVAFAEALAPEFKDYIEQVVANAKVLGEELTARGLRIVSGGTDNHLLLVDLQPLGITGKLAEHALDEAGITVNKNTIPFDPASPFVTSGIRIGTAAMTSRGFKEAEMKQIAELIELVLKNPEDQETLTSAHKQVLALTGRFPLYPERG</sequence>
<organism>
    <name type="scientific">Exiguobacterium sibiricum (strain DSM 17290 / CCUG 55495 / CIP 109462 / JCM 13490 / 255-15)</name>
    <dbReference type="NCBI Taxonomy" id="262543"/>
    <lineage>
        <taxon>Bacteria</taxon>
        <taxon>Bacillati</taxon>
        <taxon>Bacillota</taxon>
        <taxon>Bacilli</taxon>
        <taxon>Bacillales</taxon>
        <taxon>Bacillales Family XII. Incertae Sedis</taxon>
        <taxon>Exiguobacterium</taxon>
    </lineage>
</organism>
<name>GLYA_EXIS2</name>
<evidence type="ECO:0000255" key="1">
    <source>
        <dbReference type="HAMAP-Rule" id="MF_00051"/>
    </source>
</evidence>